<comment type="function">
    <text evidence="1">Part of the Tol-Pal system, which plays a role in outer membrane invagination during cell division and is important for maintaining outer membrane integrity.</text>
</comment>
<comment type="subunit">
    <text evidence="1">The Tol-Pal system is composed of five core proteins: the inner membrane proteins TolA, TolQ and TolR, the periplasmic protein TolB and the outer membrane protein Pal. They form a network linking the inner and outer membranes and the peptidoglycan layer.</text>
</comment>
<comment type="subcellular location">
    <subcellularLocation>
        <location evidence="1">Periplasm</location>
    </subcellularLocation>
</comment>
<comment type="similarity">
    <text evidence="1">Belongs to the TolB family.</text>
</comment>
<proteinExistence type="inferred from homology"/>
<organism>
    <name type="scientific">Vibrio cholerae serotype O1 (strain ATCC 39541 / Classical Ogawa 395 / O395)</name>
    <dbReference type="NCBI Taxonomy" id="345073"/>
    <lineage>
        <taxon>Bacteria</taxon>
        <taxon>Pseudomonadati</taxon>
        <taxon>Pseudomonadota</taxon>
        <taxon>Gammaproteobacteria</taxon>
        <taxon>Vibrionales</taxon>
        <taxon>Vibrionaceae</taxon>
        <taxon>Vibrio</taxon>
    </lineage>
</organism>
<dbReference type="EMBL" id="AF187269">
    <property type="protein sequence ID" value="AAG17042.1"/>
    <property type="molecule type" value="Genomic_DNA"/>
</dbReference>
<dbReference type="EMBL" id="CP000627">
    <property type="protein sequence ID" value="ABQ20859.1"/>
    <property type="molecule type" value="Genomic_DNA"/>
</dbReference>
<dbReference type="EMBL" id="CP001235">
    <property type="protein sequence ID" value="ACP09945.1"/>
    <property type="molecule type" value="Genomic_DNA"/>
</dbReference>
<dbReference type="SMR" id="A5F753"/>
<dbReference type="KEGG" id="vco:VC0395_A1429"/>
<dbReference type="KEGG" id="vcr:VC395_1951"/>
<dbReference type="PATRIC" id="fig|345073.21.peg.1885"/>
<dbReference type="eggNOG" id="COG0823">
    <property type="taxonomic scope" value="Bacteria"/>
</dbReference>
<dbReference type="HOGENOM" id="CLU_047123_0_0_6"/>
<dbReference type="OrthoDB" id="9802240at2"/>
<dbReference type="Proteomes" id="UP000000249">
    <property type="component" value="Chromosome 2"/>
</dbReference>
<dbReference type="GO" id="GO:0042597">
    <property type="term" value="C:periplasmic space"/>
    <property type="evidence" value="ECO:0007669"/>
    <property type="project" value="UniProtKB-SubCell"/>
</dbReference>
<dbReference type="GO" id="GO:0051301">
    <property type="term" value="P:cell division"/>
    <property type="evidence" value="ECO:0007669"/>
    <property type="project" value="UniProtKB-UniRule"/>
</dbReference>
<dbReference type="GO" id="GO:0017038">
    <property type="term" value="P:protein import"/>
    <property type="evidence" value="ECO:0007669"/>
    <property type="project" value="InterPro"/>
</dbReference>
<dbReference type="Gene3D" id="2.120.10.30">
    <property type="entry name" value="TolB, C-terminal domain"/>
    <property type="match status" value="1"/>
</dbReference>
<dbReference type="Gene3D" id="3.40.50.10070">
    <property type="entry name" value="TolB, N-terminal domain"/>
    <property type="match status" value="1"/>
</dbReference>
<dbReference type="HAMAP" id="MF_00671">
    <property type="entry name" value="TolB"/>
    <property type="match status" value="1"/>
</dbReference>
<dbReference type="InterPro" id="IPR011042">
    <property type="entry name" value="6-blade_b-propeller_TolB-like"/>
</dbReference>
<dbReference type="InterPro" id="IPR011659">
    <property type="entry name" value="PD40"/>
</dbReference>
<dbReference type="InterPro" id="IPR014167">
    <property type="entry name" value="Tol-Pal_TolB"/>
</dbReference>
<dbReference type="InterPro" id="IPR007195">
    <property type="entry name" value="TolB_N"/>
</dbReference>
<dbReference type="NCBIfam" id="TIGR02800">
    <property type="entry name" value="propeller_TolB"/>
    <property type="match status" value="1"/>
</dbReference>
<dbReference type="PANTHER" id="PTHR36842:SF1">
    <property type="entry name" value="PROTEIN TOLB"/>
    <property type="match status" value="1"/>
</dbReference>
<dbReference type="PANTHER" id="PTHR36842">
    <property type="entry name" value="PROTEIN TOLB HOMOLOG"/>
    <property type="match status" value="1"/>
</dbReference>
<dbReference type="Pfam" id="PF07676">
    <property type="entry name" value="PD40"/>
    <property type="match status" value="3"/>
</dbReference>
<dbReference type="Pfam" id="PF04052">
    <property type="entry name" value="TolB_N"/>
    <property type="match status" value="1"/>
</dbReference>
<dbReference type="SUPFAM" id="SSF52964">
    <property type="entry name" value="TolB, N-terminal domain"/>
    <property type="match status" value="1"/>
</dbReference>
<dbReference type="SUPFAM" id="SSF69304">
    <property type="entry name" value="Tricorn protease N-terminal domain"/>
    <property type="match status" value="1"/>
</dbReference>
<sequence length="450" mass="49645">MFKRLVFVLMLIGTGFSNIANAALELVITDGIDSARPIAIVPFKWEGATKLPEDVSAVIASDLQRSGKFSPVPTSKMPQTPYSEEQVNFGKWTSMGVDSLLTGTITQNAEGSYVISYQLVDIVRGQLTQGQSKALSQDGQLVLSKDHVLFNKVATVPASRMREYAHRIADLVYEELTGERGAFLTRIAYVVVNDKDPYPYQLRIADYDGYNERLVLRSKQPLMSPAWSPDGQTLAYVSFQNGQAEIYMMNIYSGKREKLTSFPRHNGAPRFSPDGKTLALVLSKTGNLQVYTMDLATRRLTEVTSGRSNNTEPFWHPDGKSLIFTSDRGGKPQIYQVNLSGGETKRLTWQGSQNLGGQITPDGKFLVMVNRSDSGFNLAKQDLETGAMQILTKTLLDESPSIAPNGGMVIYSSIYNKANVLSMVSIDGRFKARLPATNGRVRAPAWSPFL</sequence>
<feature type="signal peptide" evidence="1">
    <location>
        <begin position="1"/>
        <end position="22"/>
    </location>
</feature>
<feature type="chain" id="PRO_1000072720" description="Tol-Pal system protein TolB" evidence="1">
    <location>
        <begin position="23"/>
        <end position="450"/>
    </location>
</feature>
<evidence type="ECO:0000255" key="1">
    <source>
        <dbReference type="HAMAP-Rule" id="MF_00671"/>
    </source>
</evidence>
<accession>A5F753</accession>
<accession>C3M1M9</accession>
<keyword id="KW-0131">Cell cycle</keyword>
<keyword id="KW-0132">Cell division</keyword>
<keyword id="KW-0574">Periplasm</keyword>
<keyword id="KW-0732">Signal</keyword>
<protein>
    <recommendedName>
        <fullName evidence="1">Tol-Pal system protein TolB</fullName>
    </recommendedName>
</protein>
<reference key="1">
    <citation type="journal article" date="2000" name="J. Bacteriol.">
        <title>CTXphi infection of Vibrio cholerae requires the tolQRA gene products.</title>
        <authorList>
            <person name="Heilpern A.J."/>
            <person name="Waldor M.K."/>
        </authorList>
    </citation>
    <scope>NUCLEOTIDE SEQUENCE [GENOMIC DNA]</scope>
</reference>
<reference key="2">
    <citation type="submission" date="2007-03" db="EMBL/GenBank/DDBJ databases">
        <authorList>
            <person name="Heidelberg J."/>
        </authorList>
    </citation>
    <scope>NUCLEOTIDE SEQUENCE [LARGE SCALE GENOMIC DNA]</scope>
    <source>
        <strain>ATCC 39541 / Classical Ogawa 395 / O395</strain>
    </source>
</reference>
<reference key="3">
    <citation type="journal article" date="2008" name="PLoS ONE">
        <title>A recalibrated molecular clock and independent origins for the cholera pandemic clones.</title>
        <authorList>
            <person name="Feng L."/>
            <person name="Reeves P.R."/>
            <person name="Lan R."/>
            <person name="Ren Y."/>
            <person name="Gao C."/>
            <person name="Zhou Z."/>
            <person name="Ren Y."/>
            <person name="Cheng J."/>
            <person name="Wang W."/>
            <person name="Wang J."/>
            <person name="Qian W."/>
            <person name="Li D."/>
            <person name="Wang L."/>
        </authorList>
    </citation>
    <scope>NUCLEOTIDE SEQUENCE [LARGE SCALE GENOMIC DNA]</scope>
    <source>
        <strain>ATCC 39541 / Classical Ogawa 395 / O395</strain>
    </source>
</reference>
<gene>
    <name evidence="1" type="primary">tolB</name>
    <name type="ordered locus">VC0395_A1429</name>
    <name type="ordered locus">VC395_1951</name>
</gene>
<name>TOLB_VIBC3</name>